<accession>P66159</accession>
<accession>P58087</accession>
<proteinExistence type="inferred from homology"/>
<keyword id="KW-0687">Ribonucleoprotein</keyword>
<keyword id="KW-0689">Ribosomal protein</keyword>
<sequence length="62" mass="6928">MAKVCYFTGRKTVSGNNRSHAMNQTKRTVKPNLQKVTILVDGKPKKVWASARALKSGKVERI</sequence>
<reference key="1">
    <citation type="journal article" date="2002" name="Proc. Natl. Acad. Sci. U.S.A.">
        <title>Genome sequence and comparative microarray analysis of serotype M18 group A Streptococcus strains associated with acute rheumatic fever outbreaks.</title>
        <authorList>
            <person name="Smoot J.C."/>
            <person name="Barbian K.D."/>
            <person name="Van Gompel J.J."/>
            <person name="Smoot L.M."/>
            <person name="Chaussee M.S."/>
            <person name="Sylva G.L."/>
            <person name="Sturdevant D.E."/>
            <person name="Ricklefs S.M."/>
            <person name="Porcella S.F."/>
            <person name="Parkins L.D."/>
            <person name="Beres S.B."/>
            <person name="Campbell D.S."/>
            <person name="Smith T.M."/>
            <person name="Zhang Q."/>
            <person name="Kapur V."/>
            <person name="Daly J.A."/>
            <person name="Veasy L.G."/>
            <person name="Musser J.M."/>
        </authorList>
    </citation>
    <scope>NUCLEOTIDE SEQUENCE [LARGE SCALE GENOMIC DNA]</scope>
    <source>
        <strain>MGAS8232</strain>
    </source>
</reference>
<evidence type="ECO:0000305" key="1"/>
<dbReference type="EMBL" id="AE009949">
    <property type="protein sequence ID" value="AAL98447.1"/>
    <property type="molecule type" value="Genomic_DNA"/>
</dbReference>
<dbReference type="RefSeq" id="WP_002982870.1">
    <property type="nucleotide sequence ID" value="NC_003485.1"/>
</dbReference>
<dbReference type="SMR" id="P66159"/>
<dbReference type="GeneID" id="83705580"/>
<dbReference type="KEGG" id="spm:spyM18_1953"/>
<dbReference type="HOGENOM" id="CLU_064548_7_1_9"/>
<dbReference type="GO" id="GO:1990904">
    <property type="term" value="C:ribonucleoprotein complex"/>
    <property type="evidence" value="ECO:0007669"/>
    <property type="project" value="UniProtKB-KW"/>
</dbReference>
<dbReference type="GO" id="GO:0005840">
    <property type="term" value="C:ribosome"/>
    <property type="evidence" value="ECO:0007669"/>
    <property type="project" value="UniProtKB-KW"/>
</dbReference>
<dbReference type="GO" id="GO:0003735">
    <property type="term" value="F:structural constituent of ribosome"/>
    <property type="evidence" value="ECO:0007669"/>
    <property type="project" value="InterPro"/>
</dbReference>
<dbReference type="GO" id="GO:0006412">
    <property type="term" value="P:translation"/>
    <property type="evidence" value="ECO:0007669"/>
    <property type="project" value="UniProtKB-UniRule"/>
</dbReference>
<dbReference type="Gene3D" id="2.30.170.40">
    <property type="entry name" value="Ribosomal protein L28/L24"/>
    <property type="match status" value="1"/>
</dbReference>
<dbReference type="HAMAP" id="MF_00373">
    <property type="entry name" value="Ribosomal_bL28"/>
    <property type="match status" value="1"/>
</dbReference>
<dbReference type="InterPro" id="IPR050096">
    <property type="entry name" value="Bacterial_rp_bL28"/>
</dbReference>
<dbReference type="InterPro" id="IPR026569">
    <property type="entry name" value="Ribosomal_bL28"/>
</dbReference>
<dbReference type="InterPro" id="IPR034704">
    <property type="entry name" value="Ribosomal_bL28/bL31-like_sf"/>
</dbReference>
<dbReference type="InterPro" id="IPR001383">
    <property type="entry name" value="Ribosomal_bL28_bact-type"/>
</dbReference>
<dbReference type="InterPro" id="IPR037147">
    <property type="entry name" value="Ribosomal_bL28_sf"/>
</dbReference>
<dbReference type="NCBIfam" id="TIGR00009">
    <property type="entry name" value="L28"/>
    <property type="match status" value="1"/>
</dbReference>
<dbReference type="PANTHER" id="PTHR39080">
    <property type="entry name" value="50S RIBOSOMAL PROTEIN L28"/>
    <property type="match status" value="1"/>
</dbReference>
<dbReference type="PANTHER" id="PTHR39080:SF1">
    <property type="entry name" value="LARGE RIBOSOMAL SUBUNIT PROTEIN BL28A"/>
    <property type="match status" value="1"/>
</dbReference>
<dbReference type="Pfam" id="PF00830">
    <property type="entry name" value="Ribosomal_L28"/>
    <property type="match status" value="1"/>
</dbReference>
<dbReference type="SUPFAM" id="SSF143800">
    <property type="entry name" value="L28p-like"/>
    <property type="match status" value="1"/>
</dbReference>
<name>RL28_STRP8</name>
<feature type="chain" id="PRO_0000178568" description="Large ribosomal subunit protein bL28">
    <location>
        <begin position="1"/>
        <end position="62"/>
    </location>
</feature>
<protein>
    <recommendedName>
        <fullName evidence="1">Large ribosomal subunit protein bL28</fullName>
    </recommendedName>
    <alternativeName>
        <fullName>50S ribosomal protein L28</fullName>
    </alternativeName>
</protein>
<organism>
    <name type="scientific">Streptococcus pyogenes serotype M18 (strain MGAS8232)</name>
    <dbReference type="NCBI Taxonomy" id="186103"/>
    <lineage>
        <taxon>Bacteria</taxon>
        <taxon>Bacillati</taxon>
        <taxon>Bacillota</taxon>
        <taxon>Bacilli</taxon>
        <taxon>Lactobacillales</taxon>
        <taxon>Streptococcaceae</taxon>
        <taxon>Streptococcus</taxon>
    </lineage>
</organism>
<gene>
    <name type="primary">rpmB</name>
    <name type="synonym">rl28</name>
    <name type="ordered locus">spyM18_1953</name>
</gene>
<comment type="similarity">
    <text evidence="1">Belongs to the bacterial ribosomal protein bL28 family.</text>
</comment>